<organism>
    <name type="scientific">Staphylococcus aureus (strain MW2)</name>
    <dbReference type="NCBI Taxonomy" id="196620"/>
    <lineage>
        <taxon>Bacteria</taxon>
        <taxon>Bacillati</taxon>
        <taxon>Bacillota</taxon>
        <taxon>Bacilli</taxon>
        <taxon>Bacillales</taxon>
        <taxon>Staphylococcaceae</taxon>
        <taxon>Staphylococcus</taxon>
    </lineage>
</organism>
<feature type="chain" id="PRO_0000274136" description="Transcriptional regulator CtsR">
    <location>
        <begin position="1"/>
        <end position="153"/>
    </location>
</feature>
<name>CTSR_STAAW</name>
<gene>
    <name type="primary">ctsR</name>
    <name type="ordered locus">MW0477</name>
</gene>
<evidence type="ECO:0000250" key="1"/>
<evidence type="ECO:0000305" key="2"/>
<proteinExistence type="inferred from homology"/>
<comment type="function">
    <text evidence="1">Negative regulator of clpC, clpB and clpP transcription by binding directly and specifically to their promoter region.</text>
</comment>
<comment type="similarity">
    <text evidence="2">Belongs to the CtsR family.</text>
</comment>
<reference key="1">
    <citation type="journal article" date="2002" name="Lancet">
        <title>Genome and virulence determinants of high virulence community-acquired MRSA.</title>
        <authorList>
            <person name="Baba T."/>
            <person name="Takeuchi F."/>
            <person name="Kuroda M."/>
            <person name="Yuzawa H."/>
            <person name="Aoki K."/>
            <person name="Oguchi A."/>
            <person name="Nagai Y."/>
            <person name="Iwama N."/>
            <person name="Asano K."/>
            <person name="Naimi T."/>
            <person name="Kuroda H."/>
            <person name="Cui L."/>
            <person name="Yamamoto K."/>
            <person name="Hiramatsu K."/>
        </authorList>
    </citation>
    <scope>NUCLEOTIDE SEQUENCE [LARGE SCALE GENOMIC DNA]</scope>
    <source>
        <strain>MW2</strain>
    </source>
</reference>
<keyword id="KW-0238">DNA-binding</keyword>
<keyword id="KW-0678">Repressor</keyword>
<keyword id="KW-0346">Stress response</keyword>
<keyword id="KW-0804">Transcription</keyword>
<keyword id="KW-0805">Transcription regulation</keyword>
<dbReference type="EMBL" id="BA000033">
    <property type="protein sequence ID" value="BAB94342.1"/>
    <property type="molecule type" value="Genomic_DNA"/>
</dbReference>
<dbReference type="RefSeq" id="WP_000551762.1">
    <property type="nucleotide sequence ID" value="NC_003923.1"/>
</dbReference>
<dbReference type="SMR" id="Q7A1R4"/>
<dbReference type="KEGG" id="sam:MW0477"/>
<dbReference type="HOGENOM" id="CLU_118139_0_0_9"/>
<dbReference type="GO" id="GO:0003677">
    <property type="term" value="F:DNA binding"/>
    <property type="evidence" value="ECO:0007669"/>
    <property type="project" value="UniProtKB-KW"/>
</dbReference>
<dbReference type="GO" id="GO:0006355">
    <property type="term" value="P:regulation of DNA-templated transcription"/>
    <property type="evidence" value="ECO:0007669"/>
    <property type="project" value="InterPro"/>
</dbReference>
<dbReference type="FunFam" id="1.10.1200.150:FF:000002">
    <property type="entry name" value="Transcriptional regulator CtsR"/>
    <property type="match status" value="1"/>
</dbReference>
<dbReference type="FunFam" id="3.30.56.130:FF:000001">
    <property type="entry name" value="Transcriptional regulator CtsR"/>
    <property type="match status" value="1"/>
</dbReference>
<dbReference type="Gene3D" id="1.10.1200.150">
    <property type="entry name" value="Transcriptional regulator CtsR, C-terminal domain"/>
    <property type="match status" value="1"/>
</dbReference>
<dbReference type="Gene3D" id="3.30.56.130">
    <property type="entry name" value="Transcriptional regulator CtsR, winged HTH domain"/>
    <property type="match status" value="1"/>
</dbReference>
<dbReference type="InterPro" id="IPR008463">
    <property type="entry name" value="CtsR"/>
</dbReference>
<dbReference type="InterPro" id="IPR041473">
    <property type="entry name" value="CtsR_C"/>
</dbReference>
<dbReference type="InterPro" id="IPR041908">
    <property type="entry name" value="CtsR_C_sf"/>
</dbReference>
<dbReference type="InterPro" id="IPR040465">
    <property type="entry name" value="CtsR_N"/>
</dbReference>
<dbReference type="InterPro" id="IPR041902">
    <property type="entry name" value="CtsR_N_sf"/>
</dbReference>
<dbReference type="Pfam" id="PF05848">
    <property type="entry name" value="CtsR"/>
    <property type="match status" value="1"/>
</dbReference>
<dbReference type="Pfam" id="PF17727">
    <property type="entry name" value="CtsR_C"/>
    <property type="match status" value="1"/>
</dbReference>
<dbReference type="PIRSF" id="PIRSF010607">
    <property type="entry name" value="Txn_repr_CtsR"/>
    <property type="match status" value="1"/>
</dbReference>
<accession>Q7A1R4</accession>
<sequence length="153" mass="17842">MHNMSDIIEQYIKRLFEESNEDVVEIQRANIAQRFDCVPSQLNYVIKTRFTNEHGYEIESKRGGGGYIRITKIENKDATGYINHLLQLIGPSISQQQAYYIIDGLLDKMLINEREAKMIQAVIDRETLSMDMVSRDIIRANILKRLLPVINYY</sequence>
<protein>
    <recommendedName>
        <fullName>Transcriptional regulator CtsR</fullName>
    </recommendedName>
</protein>